<proteinExistence type="evidence at transcript level"/>
<dbReference type="EMBL" id="AF125250">
    <property type="protein sequence ID" value="AAG48154.1"/>
    <property type="molecule type" value="mRNA"/>
</dbReference>
<dbReference type="RefSeq" id="NP_001310117.1">
    <property type="nucleotide sequence ID" value="NM_001323188.1"/>
</dbReference>
<dbReference type="SMR" id="Q9DE68"/>
<dbReference type="GlyCosmos" id="Q9DE68">
    <property type="glycosylation" value="3 sites, No reported glycans"/>
</dbReference>
<dbReference type="Ensembl" id="ENSCJPT00005008312.1">
    <property type="protein sequence ID" value="ENSCJPP00005005070.1"/>
    <property type="gene ID" value="ENSCJPG00005004901.1"/>
</dbReference>
<dbReference type="GeneID" id="107311498"/>
<dbReference type="KEGG" id="cjo:107311498"/>
<dbReference type="CTD" id="1634"/>
<dbReference type="GeneTree" id="ENSGT00940000158382"/>
<dbReference type="OrthoDB" id="1111193at2759"/>
<dbReference type="Proteomes" id="UP000694412">
    <property type="component" value="Chromosome 1"/>
</dbReference>
<dbReference type="GO" id="GO:0005615">
    <property type="term" value="C:extracellular space"/>
    <property type="evidence" value="ECO:0007669"/>
    <property type="project" value="TreeGrafter"/>
</dbReference>
<dbReference type="GO" id="GO:0050840">
    <property type="term" value="F:extracellular matrix binding"/>
    <property type="evidence" value="ECO:0007669"/>
    <property type="project" value="Ensembl"/>
</dbReference>
<dbReference type="GO" id="GO:0005539">
    <property type="term" value="F:glycosaminoglycan binding"/>
    <property type="evidence" value="ECO:0007669"/>
    <property type="project" value="Ensembl"/>
</dbReference>
<dbReference type="GO" id="GO:0016525">
    <property type="term" value="P:negative regulation of angiogenesis"/>
    <property type="evidence" value="ECO:0007669"/>
    <property type="project" value="Ensembl"/>
</dbReference>
<dbReference type="GO" id="GO:0010596">
    <property type="term" value="P:negative regulation of endothelial cell migration"/>
    <property type="evidence" value="ECO:0007669"/>
    <property type="project" value="Ensembl"/>
</dbReference>
<dbReference type="GO" id="GO:1900747">
    <property type="term" value="P:negative regulation of vascular endothelial growth factor signaling pathway"/>
    <property type="evidence" value="ECO:0007669"/>
    <property type="project" value="Ensembl"/>
</dbReference>
<dbReference type="GO" id="GO:0016239">
    <property type="term" value="P:positive regulation of macroautophagy"/>
    <property type="evidence" value="ECO:0007669"/>
    <property type="project" value="Ensembl"/>
</dbReference>
<dbReference type="GO" id="GO:0051901">
    <property type="term" value="P:positive regulation of mitochondrial depolarization"/>
    <property type="evidence" value="ECO:0007669"/>
    <property type="project" value="Ensembl"/>
</dbReference>
<dbReference type="GO" id="GO:0090141">
    <property type="term" value="P:positive regulation of mitochondrial fission"/>
    <property type="evidence" value="ECO:0007669"/>
    <property type="project" value="Ensembl"/>
</dbReference>
<dbReference type="GO" id="GO:0051897">
    <property type="term" value="P:positive regulation of phosphatidylinositol 3-kinase/protein kinase B signal transduction"/>
    <property type="evidence" value="ECO:0007669"/>
    <property type="project" value="Ensembl"/>
</dbReference>
<dbReference type="GO" id="GO:0045944">
    <property type="term" value="P:positive regulation of transcription by RNA polymerase II"/>
    <property type="evidence" value="ECO:0007669"/>
    <property type="project" value="Ensembl"/>
</dbReference>
<dbReference type="FunFam" id="3.80.10.10:FF:000038">
    <property type="entry name" value="Biglycan"/>
    <property type="match status" value="1"/>
</dbReference>
<dbReference type="Gene3D" id="3.80.10.10">
    <property type="entry name" value="Ribonuclease Inhibitor"/>
    <property type="match status" value="1"/>
</dbReference>
<dbReference type="InterPro" id="IPR001611">
    <property type="entry name" value="Leu-rich_rpt"/>
</dbReference>
<dbReference type="InterPro" id="IPR003591">
    <property type="entry name" value="Leu-rich_rpt_typical-subtyp"/>
</dbReference>
<dbReference type="InterPro" id="IPR032675">
    <property type="entry name" value="LRR_dom_sf"/>
</dbReference>
<dbReference type="InterPro" id="IPR000372">
    <property type="entry name" value="LRRNT"/>
</dbReference>
<dbReference type="InterPro" id="IPR050333">
    <property type="entry name" value="SLRP"/>
</dbReference>
<dbReference type="InterPro" id="IPR016352">
    <property type="entry name" value="SLRP_I_decor/aspor/byglycan"/>
</dbReference>
<dbReference type="PANTHER" id="PTHR45712">
    <property type="entry name" value="AGAP008170-PA"/>
    <property type="match status" value="1"/>
</dbReference>
<dbReference type="PANTHER" id="PTHR45712:SF14">
    <property type="entry name" value="DECORIN"/>
    <property type="match status" value="1"/>
</dbReference>
<dbReference type="Pfam" id="PF13855">
    <property type="entry name" value="LRR_8"/>
    <property type="match status" value="3"/>
</dbReference>
<dbReference type="Pfam" id="PF01462">
    <property type="entry name" value="LRRNT"/>
    <property type="match status" value="1"/>
</dbReference>
<dbReference type="PIRSF" id="PIRSF002490">
    <property type="entry name" value="SLRP_I"/>
    <property type="match status" value="1"/>
</dbReference>
<dbReference type="SMART" id="SM00364">
    <property type="entry name" value="LRR_BAC"/>
    <property type="match status" value="4"/>
</dbReference>
<dbReference type="SMART" id="SM00365">
    <property type="entry name" value="LRR_SD22"/>
    <property type="match status" value="5"/>
</dbReference>
<dbReference type="SMART" id="SM00369">
    <property type="entry name" value="LRR_TYP"/>
    <property type="match status" value="7"/>
</dbReference>
<dbReference type="SMART" id="SM00013">
    <property type="entry name" value="LRRNT"/>
    <property type="match status" value="1"/>
</dbReference>
<dbReference type="SUPFAM" id="SSF52058">
    <property type="entry name" value="L domain-like"/>
    <property type="match status" value="1"/>
</dbReference>
<dbReference type="PROSITE" id="PS51450">
    <property type="entry name" value="LRR"/>
    <property type="match status" value="7"/>
</dbReference>
<keyword id="KW-1015">Disulfide bond</keyword>
<keyword id="KW-0272">Extracellular matrix</keyword>
<keyword id="KW-0325">Glycoprotein</keyword>
<keyword id="KW-0433">Leucine-rich repeat</keyword>
<keyword id="KW-0654">Proteoglycan</keyword>
<keyword id="KW-1185">Reference proteome</keyword>
<keyword id="KW-0677">Repeat</keyword>
<keyword id="KW-0964">Secreted</keyword>
<keyword id="KW-0732">Signal</keyword>
<name>PGS2_COTJA</name>
<evidence type="ECO:0000250" key="1"/>
<evidence type="ECO:0000250" key="2">
    <source>
        <dbReference type="UniProtKB" id="Q01129"/>
    </source>
</evidence>
<evidence type="ECO:0000255" key="3"/>
<evidence type="ECO:0000305" key="4"/>
<organism>
    <name type="scientific">Coturnix japonica</name>
    <name type="common">Japanese quail</name>
    <name type="synonym">Coturnix coturnix japonica</name>
    <dbReference type="NCBI Taxonomy" id="93934"/>
    <lineage>
        <taxon>Eukaryota</taxon>
        <taxon>Metazoa</taxon>
        <taxon>Chordata</taxon>
        <taxon>Craniata</taxon>
        <taxon>Vertebrata</taxon>
        <taxon>Euteleostomi</taxon>
        <taxon>Archelosauria</taxon>
        <taxon>Archosauria</taxon>
        <taxon>Dinosauria</taxon>
        <taxon>Saurischia</taxon>
        <taxon>Theropoda</taxon>
        <taxon>Coelurosauria</taxon>
        <taxon>Aves</taxon>
        <taxon>Neognathae</taxon>
        <taxon>Galloanserae</taxon>
        <taxon>Galliformes</taxon>
        <taxon>Phasianidae</taxon>
        <taxon>Perdicinae</taxon>
        <taxon>Coturnix</taxon>
    </lineage>
</organism>
<sequence length="356" mass="39572">MRLVLFILLLPVCLATPFHQKGLFDFMLEDEGSADLASTDDPVISGFGPVCPFRCQCHLRVVQCSDLGLERVPKDLPPDTTLLDLQNNKITEIRDGDFKNLKNLHALILVNNKISKISPQAFAPLKKLERLYLSKNNLKELPENMPKSLQEIRAHENEISKLRKAVFNGLNQVIVLELGTNPLKSSGIENGAFQGMKRLSYIRIADTNITSIPKGLPPSLTELHLDGNKISKIDAEGLSGLTNLAKLGLSFNSISSVENGSLNNVPHLRELHLNNNELVRVPSGLGEHKYIQVVYLHNNKIASIGINDFCPLGYNTKKATYSGVSLFSNPVQYWEIQPSAFRCIHERSAVQIGNYK</sequence>
<comment type="function">
    <text evidence="1">May affect the rate of fibrils formation.</text>
</comment>
<comment type="subunit">
    <text evidence="1">Binds to type I and type II collagen, to fibronectin and TGF-beta. Forms a ternary complex with MFAP2 and ELN (By similarity).</text>
</comment>
<comment type="subcellular location">
    <subcellularLocation>
        <location evidence="1">Secreted</location>
        <location evidence="1">Extracellular space</location>
        <location evidence="1">Extracellular matrix</location>
    </subcellularLocation>
</comment>
<comment type="PTM">
    <text evidence="1">The attached glycosaminoglycan chain can be either chondroitin sulfate or dermatan sulfate depending upon the tissue of origin.</text>
</comment>
<comment type="similarity">
    <text evidence="4">Belongs to the small leucine-rich proteoglycan (SLRP) family. SLRP class I subfamily.</text>
</comment>
<protein>
    <recommendedName>
        <fullName>Decorin</fullName>
    </recommendedName>
    <alternativeName>
        <fullName>Bone proteoglycan II</fullName>
    </alternativeName>
    <alternativeName>
        <fullName>PG-S2</fullName>
    </alternativeName>
</protein>
<accession>Q9DE68</accession>
<feature type="signal peptide" evidence="2">
    <location>
        <begin position="1"/>
        <end position="15"/>
    </location>
</feature>
<feature type="propeptide" id="PRO_0000032725" evidence="2">
    <location>
        <begin position="16"/>
        <end position="29"/>
    </location>
</feature>
<feature type="chain" id="PRO_0000032726" description="Decorin">
    <location>
        <begin position="30"/>
        <end position="356"/>
    </location>
</feature>
<feature type="repeat" description="LRR 1">
    <location>
        <begin position="70"/>
        <end position="90"/>
    </location>
</feature>
<feature type="repeat" description="LRR 2">
    <location>
        <begin position="91"/>
        <end position="114"/>
    </location>
</feature>
<feature type="repeat" description="LRR 3">
    <location>
        <begin position="115"/>
        <end position="138"/>
    </location>
</feature>
<feature type="repeat" description="LRR 4">
    <location>
        <begin position="139"/>
        <end position="159"/>
    </location>
</feature>
<feature type="repeat" description="LRR 5">
    <location>
        <begin position="160"/>
        <end position="183"/>
    </location>
</feature>
<feature type="repeat" description="LRR 6">
    <location>
        <begin position="184"/>
        <end position="209"/>
    </location>
</feature>
<feature type="repeat" description="LRR 7">
    <location>
        <begin position="210"/>
        <end position="230"/>
    </location>
</feature>
<feature type="repeat" description="LRR 8">
    <location>
        <begin position="231"/>
        <end position="254"/>
    </location>
</feature>
<feature type="repeat" description="LRR 9">
    <location>
        <begin position="255"/>
        <end position="278"/>
    </location>
</feature>
<feature type="repeat" description="LRR 10">
    <location>
        <begin position="279"/>
        <end position="301"/>
    </location>
</feature>
<feature type="repeat" description="LRR 11">
    <location>
        <begin position="302"/>
        <end position="331"/>
    </location>
</feature>
<feature type="repeat" description="LRR 12">
    <location>
        <begin position="332"/>
        <end position="356"/>
    </location>
</feature>
<feature type="glycosylation site" description="O-linked (Xyl...) (glycosaminoglycan) serine" evidence="3">
    <location>
        <position position="45"/>
    </location>
</feature>
<feature type="glycosylation site" description="N-linked (GlcNAc...) asparagine" evidence="3">
    <location>
        <position position="208"/>
    </location>
</feature>
<feature type="glycosylation site" description="N-linked (GlcNAc...) asparagine" evidence="3">
    <location>
        <position position="259"/>
    </location>
</feature>
<feature type="disulfide bond" evidence="1">
    <location>
        <begin position="51"/>
        <end position="57"/>
    </location>
</feature>
<feature type="disulfide bond" evidence="1">
    <location>
        <begin position="55"/>
        <end position="64"/>
    </location>
</feature>
<feature type="disulfide bond" evidence="1">
    <location>
        <begin position="310"/>
        <end position="343"/>
    </location>
</feature>
<reference key="1">
    <citation type="journal article" date="2000" name="Matrix Biol.">
        <title>Molecular cloning and relative tissue expression of decorin and lumican in embryonic quail cornea.</title>
        <authorList>
            <person name="Corpuz L.M."/>
            <person name="Dunlevy J.R."/>
            <person name="Hassell J.R."/>
            <person name="Conrad A.H."/>
            <person name="Conrad G.W."/>
        </authorList>
    </citation>
    <scope>NUCLEOTIDE SEQUENCE [MRNA]</scope>
    <source>
        <tissue>Cornea</tissue>
        <tissue>Sclera</tissue>
    </source>
</reference>
<gene>
    <name type="primary">DCN</name>
</gene>